<keyword id="KW-0963">Cytoplasm</keyword>
<keyword id="KW-0342">GTP-binding</keyword>
<keyword id="KW-0396">Initiation factor</keyword>
<keyword id="KW-0547">Nucleotide-binding</keyword>
<keyword id="KW-0648">Protein biosynthesis</keyword>
<reference key="1">
    <citation type="submission" date="2007-04" db="EMBL/GenBank/DDBJ databases">
        <title>Complete sequence of chromosome of Rhodobacter sphaeroides ATCC 17025.</title>
        <authorList>
            <consortium name="US DOE Joint Genome Institute"/>
            <person name="Copeland A."/>
            <person name="Lucas S."/>
            <person name="Lapidus A."/>
            <person name="Barry K."/>
            <person name="Detter J.C."/>
            <person name="Glavina del Rio T."/>
            <person name="Hammon N."/>
            <person name="Israni S."/>
            <person name="Dalin E."/>
            <person name="Tice H."/>
            <person name="Pitluck S."/>
            <person name="Chertkov O."/>
            <person name="Brettin T."/>
            <person name="Bruce D."/>
            <person name="Han C."/>
            <person name="Schmutz J."/>
            <person name="Larimer F."/>
            <person name="Land M."/>
            <person name="Hauser L."/>
            <person name="Kyrpides N."/>
            <person name="Kim E."/>
            <person name="Richardson P."/>
            <person name="Mackenzie C."/>
            <person name="Choudhary M."/>
            <person name="Donohue T.J."/>
            <person name="Kaplan S."/>
        </authorList>
    </citation>
    <scope>NUCLEOTIDE SEQUENCE [LARGE SCALE GENOMIC DNA]</scope>
    <source>
        <strain>ATCC 17025 / ATH 2.4.3</strain>
    </source>
</reference>
<feature type="chain" id="PRO_1000008319" description="Translation initiation factor IF-2">
    <location>
        <begin position="1"/>
        <end position="838"/>
    </location>
</feature>
<feature type="domain" description="tr-type G">
    <location>
        <begin position="335"/>
        <end position="509"/>
    </location>
</feature>
<feature type="region of interest" description="Disordered" evidence="3">
    <location>
        <begin position="1"/>
        <end position="235"/>
    </location>
</feature>
<feature type="region of interest" description="G1" evidence="1">
    <location>
        <begin position="344"/>
        <end position="351"/>
    </location>
</feature>
<feature type="region of interest" description="G2" evidence="1">
    <location>
        <begin position="369"/>
        <end position="373"/>
    </location>
</feature>
<feature type="region of interest" description="G3" evidence="1">
    <location>
        <begin position="391"/>
        <end position="394"/>
    </location>
</feature>
<feature type="region of interest" description="G4" evidence="1">
    <location>
        <begin position="445"/>
        <end position="448"/>
    </location>
</feature>
<feature type="region of interest" description="G5" evidence="1">
    <location>
        <begin position="481"/>
        <end position="483"/>
    </location>
</feature>
<feature type="compositionally biased region" description="Polar residues" evidence="3">
    <location>
        <begin position="18"/>
        <end position="27"/>
    </location>
</feature>
<feature type="compositionally biased region" description="Low complexity" evidence="3">
    <location>
        <begin position="50"/>
        <end position="60"/>
    </location>
</feature>
<feature type="compositionally biased region" description="Basic and acidic residues" evidence="3">
    <location>
        <begin position="88"/>
        <end position="156"/>
    </location>
</feature>
<feature type="compositionally biased region" description="Low complexity" evidence="3">
    <location>
        <begin position="162"/>
        <end position="177"/>
    </location>
</feature>
<feature type="compositionally biased region" description="Basic and acidic residues" evidence="3">
    <location>
        <begin position="187"/>
        <end position="208"/>
    </location>
</feature>
<feature type="binding site" evidence="2">
    <location>
        <begin position="344"/>
        <end position="351"/>
    </location>
    <ligand>
        <name>GTP</name>
        <dbReference type="ChEBI" id="CHEBI:37565"/>
    </ligand>
</feature>
<feature type="binding site" evidence="2">
    <location>
        <begin position="391"/>
        <end position="395"/>
    </location>
    <ligand>
        <name>GTP</name>
        <dbReference type="ChEBI" id="CHEBI:37565"/>
    </ligand>
</feature>
<feature type="binding site" evidence="2">
    <location>
        <begin position="445"/>
        <end position="448"/>
    </location>
    <ligand>
        <name>GTP</name>
        <dbReference type="ChEBI" id="CHEBI:37565"/>
    </ligand>
</feature>
<name>IF2_CERS5</name>
<gene>
    <name evidence="2" type="primary">infB</name>
    <name type="ordered locus">Rsph17025_2757</name>
</gene>
<evidence type="ECO:0000250" key="1"/>
<evidence type="ECO:0000255" key="2">
    <source>
        <dbReference type="HAMAP-Rule" id="MF_00100"/>
    </source>
</evidence>
<evidence type="ECO:0000256" key="3">
    <source>
        <dbReference type="SAM" id="MobiDB-lite"/>
    </source>
</evidence>
<dbReference type="EMBL" id="CP000661">
    <property type="protein sequence ID" value="ABP71644.1"/>
    <property type="molecule type" value="Genomic_DNA"/>
</dbReference>
<dbReference type="SMR" id="A4WW80"/>
<dbReference type="STRING" id="349102.Rsph17025_2757"/>
<dbReference type="KEGG" id="rsq:Rsph17025_2757"/>
<dbReference type="eggNOG" id="COG0532">
    <property type="taxonomic scope" value="Bacteria"/>
</dbReference>
<dbReference type="HOGENOM" id="CLU_006301_10_1_5"/>
<dbReference type="BioCyc" id="RSPH349102:G1G8M-2837-MONOMER"/>
<dbReference type="GO" id="GO:0005829">
    <property type="term" value="C:cytosol"/>
    <property type="evidence" value="ECO:0007669"/>
    <property type="project" value="TreeGrafter"/>
</dbReference>
<dbReference type="GO" id="GO:0005525">
    <property type="term" value="F:GTP binding"/>
    <property type="evidence" value="ECO:0007669"/>
    <property type="project" value="UniProtKB-KW"/>
</dbReference>
<dbReference type="GO" id="GO:0003924">
    <property type="term" value="F:GTPase activity"/>
    <property type="evidence" value="ECO:0007669"/>
    <property type="project" value="UniProtKB-UniRule"/>
</dbReference>
<dbReference type="GO" id="GO:0003743">
    <property type="term" value="F:translation initiation factor activity"/>
    <property type="evidence" value="ECO:0007669"/>
    <property type="project" value="UniProtKB-UniRule"/>
</dbReference>
<dbReference type="CDD" id="cd01887">
    <property type="entry name" value="IF2_eIF5B"/>
    <property type="match status" value="1"/>
</dbReference>
<dbReference type="CDD" id="cd03702">
    <property type="entry name" value="IF2_mtIF2_II"/>
    <property type="match status" value="1"/>
</dbReference>
<dbReference type="CDD" id="cd03692">
    <property type="entry name" value="mtIF2_IVc"/>
    <property type="match status" value="1"/>
</dbReference>
<dbReference type="FunFam" id="2.40.30.10:FF:000007">
    <property type="entry name" value="Translation initiation factor IF-2"/>
    <property type="match status" value="1"/>
</dbReference>
<dbReference type="FunFam" id="2.40.30.10:FF:000008">
    <property type="entry name" value="Translation initiation factor IF-2"/>
    <property type="match status" value="1"/>
</dbReference>
<dbReference type="FunFam" id="3.40.50.10050:FF:000001">
    <property type="entry name" value="Translation initiation factor IF-2"/>
    <property type="match status" value="1"/>
</dbReference>
<dbReference type="FunFam" id="3.40.50.300:FF:000019">
    <property type="entry name" value="Translation initiation factor IF-2"/>
    <property type="match status" value="1"/>
</dbReference>
<dbReference type="Gene3D" id="3.40.50.300">
    <property type="entry name" value="P-loop containing nucleotide triphosphate hydrolases"/>
    <property type="match status" value="1"/>
</dbReference>
<dbReference type="Gene3D" id="2.40.30.10">
    <property type="entry name" value="Translation factors"/>
    <property type="match status" value="2"/>
</dbReference>
<dbReference type="Gene3D" id="3.40.50.10050">
    <property type="entry name" value="Translation initiation factor IF- 2, domain 3"/>
    <property type="match status" value="1"/>
</dbReference>
<dbReference type="HAMAP" id="MF_00100_B">
    <property type="entry name" value="IF_2_B"/>
    <property type="match status" value="1"/>
</dbReference>
<dbReference type="InterPro" id="IPR053905">
    <property type="entry name" value="EF-G-like_DII"/>
</dbReference>
<dbReference type="InterPro" id="IPR013575">
    <property type="entry name" value="IF2_assoc_dom_bac"/>
</dbReference>
<dbReference type="InterPro" id="IPR044145">
    <property type="entry name" value="IF2_II"/>
</dbReference>
<dbReference type="InterPro" id="IPR006847">
    <property type="entry name" value="IF2_N"/>
</dbReference>
<dbReference type="InterPro" id="IPR027417">
    <property type="entry name" value="P-loop_NTPase"/>
</dbReference>
<dbReference type="InterPro" id="IPR005225">
    <property type="entry name" value="Small_GTP-bd"/>
</dbReference>
<dbReference type="InterPro" id="IPR000795">
    <property type="entry name" value="T_Tr_GTP-bd_dom"/>
</dbReference>
<dbReference type="InterPro" id="IPR000178">
    <property type="entry name" value="TF_IF2_bacterial-like"/>
</dbReference>
<dbReference type="InterPro" id="IPR015760">
    <property type="entry name" value="TIF_IF2"/>
</dbReference>
<dbReference type="InterPro" id="IPR023115">
    <property type="entry name" value="TIF_IF2_dom3"/>
</dbReference>
<dbReference type="InterPro" id="IPR036925">
    <property type="entry name" value="TIF_IF2_dom3_sf"/>
</dbReference>
<dbReference type="InterPro" id="IPR009000">
    <property type="entry name" value="Transl_B-barrel_sf"/>
</dbReference>
<dbReference type="NCBIfam" id="TIGR00487">
    <property type="entry name" value="IF-2"/>
    <property type="match status" value="1"/>
</dbReference>
<dbReference type="NCBIfam" id="TIGR00231">
    <property type="entry name" value="small_GTP"/>
    <property type="match status" value="1"/>
</dbReference>
<dbReference type="PANTHER" id="PTHR43381:SF5">
    <property type="entry name" value="TR-TYPE G DOMAIN-CONTAINING PROTEIN"/>
    <property type="match status" value="1"/>
</dbReference>
<dbReference type="PANTHER" id="PTHR43381">
    <property type="entry name" value="TRANSLATION INITIATION FACTOR IF-2-RELATED"/>
    <property type="match status" value="1"/>
</dbReference>
<dbReference type="Pfam" id="PF22042">
    <property type="entry name" value="EF-G_D2"/>
    <property type="match status" value="1"/>
</dbReference>
<dbReference type="Pfam" id="PF00009">
    <property type="entry name" value="GTP_EFTU"/>
    <property type="match status" value="1"/>
</dbReference>
<dbReference type="Pfam" id="PF11987">
    <property type="entry name" value="IF-2"/>
    <property type="match status" value="1"/>
</dbReference>
<dbReference type="Pfam" id="PF08364">
    <property type="entry name" value="IF2_assoc"/>
    <property type="match status" value="1"/>
</dbReference>
<dbReference type="Pfam" id="PF04760">
    <property type="entry name" value="IF2_N"/>
    <property type="match status" value="1"/>
</dbReference>
<dbReference type="SUPFAM" id="SSF52156">
    <property type="entry name" value="Initiation factor IF2/eIF5b, domain 3"/>
    <property type="match status" value="1"/>
</dbReference>
<dbReference type="SUPFAM" id="SSF52540">
    <property type="entry name" value="P-loop containing nucleoside triphosphate hydrolases"/>
    <property type="match status" value="1"/>
</dbReference>
<dbReference type="SUPFAM" id="SSF50447">
    <property type="entry name" value="Translation proteins"/>
    <property type="match status" value="2"/>
</dbReference>
<dbReference type="PROSITE" id="PS51722">
    <property type="entry name" value="G_TR_2"/>
    <property type="match status" value="1"/>
</dbReference>
<dbReference type="PROSITE" id="PS01176">
    <property type="entry name" value="IF2"/>
    <property type="match status" value="1"/>
</dbReference>
<organism>
    <name type="scientific">Cereibacter sphaeroides (strain ATCC 17025 / ATH 2.4.3)</name>
    <name type="common">Rhodobacter sphaeroides</name>
    <dbReference type="NCBI Taxonomy" id="349102"/>
    <lineage>
        <taxon>Bacteria</taxon>
        <taxon>Pseudomonadati</taxon>
        <taxon>Pseudomonadota</taxon>
        <taxon>Alphaproteobacteria</taxon>
        <taxon>Rhodobacterales</taxon>
        <taxon>Paracoccaceae</taxon>
        <taxon>Cereibacter</taxon>
    </lineage>
</organism>
<protein>
    <recommendedName>
        <fullName evidence="2">Translation initiation factor IF-2</fullName>
    </recommendedName>
</protein>
<accession>A4WW80</accession>
<proteinExistence type="inferred from homology"/>
<comment type="function">
    <text evidence="2">One of the essential components for the initiation of protein synthesis. Protects formylmethionyl-tRNA from spontaneous hydrolysis and promotes its binding to the 30S ribosomal subunits. Also involved in the hydrolysis of GTP during the formation of the 70S ribosomal complex.</text>
</comment>
<comment type="subcellular location">
    <subcellularLocation>
        <location evidence="2">Cytoplasm</location>
    </subcellularLocation>
</comment>
<comment type="similarity">
    <text evidence="2">Belongs to the TRAFAC class translation factor GTPase superfamily. Classic translation factor GTPase family. IF-2 subfamily.</text>
</comment>
<sequence length="838" mass="90964">MSDTDGKKPLGLGGGSRSGQVKQSFSHGRTKSVLVETKRKRVVVPKPGASGSSTTTSSPSHLGDPAKRPAGISDAEMERRLAALRAAKLREVDDAKRRAEEERQREEERQRRREELEAKEREERERAEALRQKAEDEERARREAEEAARRAEEAKRAPAPAPAAAQPDAADSRASAPTSAKPGLPPSRKEREREADRDRTTKKDDSRRSGKLTLNEALSGEGGRTRSLAAMKREQEKARQKAMGFGHKAEKQVRDVQLPETIVVQELANRMAERAADVVKALMKMGMMVTMNQSIDADTAELVIEEFGHRAVRVSDADVEHVIDTVEDKAEDLQPRPPIITIMGHVDHGKTSLLDAIRKTSVVSGEAGGITQHIGAYQVKTESGAVLTFLDTPGHAAFTSMRARGAQVTDIVVLVVAADDAVMPQTVEAIKHAKAAKVPMIVAINKIDKPDADPNKVRTDLLQHEVIVEKMSGDVLDVEVSAKTGLGLDELLENIALQAELLDLRANPKRAAQGAVIEAKLDVGRGPVATVLVQHGTLKRGDIFVVGQQWGKVRALVNDKGERVDEAGPSVPVEVLGLNGTPEAGDVLNVVETEAQAREIADYREKAARDKRAAAGAATTLEQLMAKAKADADVAELPVVIKADVQGSAEAIVQALEKVGNEEVRVRVLHYGVGAITETDIGLAEASQAAVIGFNVRANASARQAANQKSVEIRYYSVIYDLVDDVKKAASGLLKAEVREHFIGYARIQEVFRITGVGNVAGCLVTEGVARRSAGVRLLRDNVVIHEGTLKTLKRFKDEVKEVQSGQECGMAFERYEDIRAGDVIEIFEREEVERKLA</sequence>